<name>RL21_STAES</name>
<keyword id="KW-0687">Ribonucleoprotein</keyword>
<keyword id="KW-0689">Ribosomal protein</keyword>
<keyword id="KW-0694">RNA-binding</keyword>
<keyword id="KW-0699">rRNA-binding</keyword>
<gene>
    <name evidence="1" type="primary">rplU</name>
    <name type="ordered locus">SE_1330</name>
</gene>
<proteinExistence type="inferred from homology"/>
<organism>
    <name type="scientific">Staphylococcus epidermidis (strain ATCC 12228 / FDA PCI 1200)</name>
    <dbReference type="NCBI Taxonomy" id="176280"/>
    <lineage>
        <taxon>Bacteria</taxon>
        <taxon>Bacillati</taxon>
        <taxon>Bacillota</taxon>
        <taxon>Bacilli</taxon>
        <taxon>Bacillales</taxon>
        <taxon>Staphylococcaceae</taxon>
        <taxon>Staphylococcus</taxon>
    </lineage>
</organism>
<dbReference type="EMBL" id="AE015929">
    <property type="protein sequence ID" value="AAO04929.1"/>
    <property type="molecule type" value="Genomic_DNA"/>
</dbReference>
<dbReference type="RefSeq" id="NP_764885.1">
    <property type="nucleotide sequence ID" value="NC_004461.1"/>
</dbReference>
<dbReference type="RefSeq" id="WP_001830820.1">
    <property type="nucleotide sequence ID" value="NZ_WBME01000016.1"/>
</dbReference>
<dbReference type="SMR" id="Q8CS87"/>
<dbReference type="GeneID" id="50018555"/>
<dbReference type="KEGG" id="sep:SE_1330"/>
<dbReference type="PATRIC" id="fig|176280.10.peg.1299"/>
<dbReference type="eggNOG" id="COG0261">
    <property type="taxonomic scope" value="Bacteria"/>
</dbReference>
<dbReference type="HOGENOM" id="CLU_061463_3_2_9"/>
<dbReference type="OrthoDB" id="9813334at2"/>
<dbReference type="Proteomes" id="UP000001411">
    <property type="component" value="Chromosome"/>
</dbReference>
<dbReference type="GO" id="GO:0005737">
    <property type="term" value="C:cytoplasm"/>
    <property type="evidence" value="ECO:0007669"/>
    <property type="project" value="UniProtKB-ARBA"/>
</dbReference>
<dbReference type="GO" id="GO:1990904">
    <property type="term" value="C:ribonucleoprotein complex"/>
    <property type="evidence" value="ECO:0007669"/>
    <property type="project" value="UniProtKB-KW"/>
</dbReference>
<dbReference type="GO" id="GO:0005840">
    <property type="term" value="C:ribosome"/>
    <property type="evidence" value="ECO:0007669"/>
    <property type="project" value="UniProtKB-KW"/>
</dbReference>
<dbReference type="GO" id="GO:0019843">
    <property type="term" value="F:rRNA binding"/>
    <property type="evidence" value="ECO:0007669"/>
    <property type="project" value="UniProtKB-UniRule"/>
</dbReference>
<dbReference type="GO" id="GO:0003735">
    <property type="term" value="F:structural constituent of ribosome"/>
    <property type="evidence" value="ECO:0007669"/>
    <property type="project" value="InterPro"/>
</dbReference>
<dbReference type="GO" id="GO:0006412">
    <property type="term" value="P:translation"/>
    <property type="evidence" value="ECO:0007669"/>
    <property type="project" value="UniProtKB-UniRule"/>
</dbReference>
<dbReference type="HAMAP" id="MF_01363">
    <property type="entry name" value="Ribosomal_bL21"/>
    <property type="match status" value="1"/>
</dbReference>
<dbReference type="InterPro" id="IPR028909">
    <property type="entry name" value="bL21-like"/>
</dbReference>
<dbReference type="InterPro" id="IPR036164">
    <property type="entry name" value="bL21-like_sf"/>
</dbReference>
<dbReference type="InterPro" id="IPR001787">
    <property type="entry name" value="Ribosomal_bL21"/>
</dbReference>
<dbReference type="NCBIfam" id="TIGR00061">
    <property type="entry name" value="L21"/>
    <property type="match status" value="1"/>
</dbReference>
<dbReference type="PANTHER" id="PTHR21349">
    <property type="entry name" value="50S RIBOSOMAL PROTEIN L21"/>
    <property type="match status" value="1"/>
</dbReference>
<dbReference type="PANTHER" id="PTHR21349:SF0">
    <property type="entry name" value="LARGE RIBOSOMAL SUBUNIT PROTEIN BL21M"/>
    <property type="match status" value="1"/>
</dbReference>
<dbReference type="Pfam" id="PF00829">
    <property type="entry name" value="Ribosomal_L21p"/>
    <property type="match status" value="1"/>
</dbReference>
<dbReference type="SUPFAM" id="SSF141091">
    <property type="entry name" value="L21p-like"/>
    <property type="match status" value="1"/>
</dbReference>
<comment type="function">
    <text evidence="1">This protein binds to 23S rRNA in the presence of protein L20.</text>
</comment>
<comment type="subunit">
    <text evidence="1">Part of the 50S ribosomal subunit. Contacts protein L20.</text>
</comment>
<comment type="similarity">
    <text evidence="1">Belongs to the bacterial ribosomal protein bL21 family.</text>
</comment>
<accession>Q8CS87</accession>
<evidence type="ECO:0000255" key="1">
    <source>
        <dbReference type="HAMAP-Rule" id="MF_01363"/>
    </source>
</evidence>
<evidence type="ECO:0000256" key="2">
    <source>
        <dbReference type="SAM" id="MobiDB-lite"/>
    </source>
</evidence>
<evidence type="ECO:0000305" key="3"/>
<reference key="1">
    <citation type="journal article" date="2003" name="Mol. Microbiol.">
        <title>Genome-based analysis of virulence genes in a non-biofilm-forming Staphylococcus epidermidis strain (ATCC 12228).</title>
        <authorList>
            <person name="Zhang Y.-Q."/>
            <person name="Ren S.-X."/>
            <person name="Li H.-L."/>
            <person name="Wang Y.-X."/>
            <person name="Fu G."/>
            <person name="Yang J."/>
            <person name="Qin Z.-Q."/>
            <person name="Miao Y.-G."/>
            <person name="Wang W.-Y."/>
            <person name="Chen R.-S."/>
            <person name="Shen Y."/>
            <person name="Chen Z."/>
            <person name="Yuan Z.-H."/>
            <person name="Zhao G.-P."/>
            <person name="Qu D."/>
            <person name="Danchin A."/>
            <person name="Wen Y.-M."/>
        </authorList>
    </citation>
    <scope>NUCLEOTIDE SEQUENCE [LARGE SCALE GENOMIC DNA]</scope>
    <source>
        <strain>ATCC 12228 / FDA PCI 1200</strain>
    </source>
</reference>
<protein>
    <recommendedName>
        <fullName evidence="1">Large ribosomal subunit protein bL21</fullName>
    </recommendedName>
    <alternativeName>
        <fullName evidence="3">50S ribosomal protein L21</fullName>
    </alternativeName>
</protein>
<feature type="chain" id="PRO_0000224939" description="Large ribosomal subunit protein bL21">
    <location>
        <begin position="1"/>
        <end position="102"/>
    </location>
</feature>
<feature type="region of interest" description="Disordered" evidence="2">
    <location>
        <begin position="79"/>
        <end position="102"/>
    </location>
</feature>
<feature type="compositionally biased region" description="Basic residues" evidence="2">
    <location>
        <begin position="79"/>
        <end position="91"/>
    </location>
</feature>
<sequence length="102" mass="11293">MFAIIETGGKQIKVEEGQEIYVEKLNANEGDSFTFDKVLFVGGDSVKVGAPTVEGASVTATVNKQGRGKKITVFTYKRRKDSKRKKGHRQPYTKLTIDKINA</sequence>